<comment type="caution">
    <text evidence="1">Product of a dubious gene prediction unlikely to encode a functional protein. Because of that it is not part of the S.cerevisiae S288c complete/reference proteome set.</text>
</comment>
<accession>P40461</accession>
<sequence length="129" mass="14438">MFPLRAVLEPCLKNVIIPIVGMVKDSISTTSKLLAESRPPLSSNFHFSYENLFSYSLLSHPVVIDTATATITRRTEQLLNRKIISSSKRFPASNIYVYQEAFTYHDTASDFIIADSYYITTPSSSGHAL</sequence>
<protein>
    <recommendedName>
        <fullName>Putative uncharacterized protein YIL141W</fullName>
    </recommendedName>
</protein>
<feature type="chain" id="PRO_0000202959" description="Putative uncharacterized protein YIL141W">
    <location>
        <begin position="1"/>
        <end position="129"/>
    </location>
</feature>
<gene>
    <name type="ordered locus">YIL141W</name>
</gene>
<organism>
    <name type="scientific">Saccharomyces cerevisiae (strain ATCC 204508 / S288c)</name>
    <name type="common">Baker's yeast</name>
    <dbReference type="NCBI Taxonomy" id="559292"/>
    <lineage>
        <taxon>Eukaryota</taxon>
        <taxon>Fungi</taxon>
        <taxon>Dikarya</taxon>
        <taxon>Ascomycota</taxon>
        <taxon>Saccharomycotina</taxon>
        <taxon>Saccharomycetes</taxon>
        <taxon>Saccharomycetales</taxon>
        <taxon>Saccharomycetaceae</taxon>
        <taxon>Saccharomyces</taxon>
    </lineage>
</organism>
<reference key="1">
    <citation type="journal article" date="1997" name="Nature">
        <title>The nucleotide sequence of Saccharomyces cerevisiae chromosome IX.</title>
        <authorList>
            <person name="Churcher C.M."/>
            <person name="Bowman S."/>
            <person name="Badcock K."/>
            <person name="Bankier A.T."/>
            <person name="Brown D."/>
            <person name="Chillingworth T."/>
            <person name="Connor R."/>
            <person name="Devlin K."/>
            <person name="Gentles S."/>
            <person name="Hamlin N."/>
            <person name="Harris D.E."/>
            <person name="Horsnell T."/>
            <person name="Hunt S."/>
            <person name="Jagels K."/>
            <person name="Jones M."/>
            <person name="Lye G."/>
            <person name="Moule S."/>
            <person name="Odell C."/>
            <person name="Pearson D."/>
            <person name="Rajandream M.A."/>
            <person name="Rice P."/>
            <person name="Rowley N."/>
            <person name="Skelton J."/>
            <person name="Smith V."/>
            <person name="Walsh S.V."/>
            <person name="Whitehead S."/>
            <person name="Barrell B.G."/>
        </authorList>
    </citation>
    <scope>NUCLEOTIDE SEQUENCE [LARGE SCALE GENOMIC DNA]</scope>
    <source>
        <strain>ATCC 204508 / S288c</strain>
    </source>
</reference>
<reference key="2">
    <citation type="journal article" date="2014" name="G3 (Bethesda)">
        <title>The reference genome sequence of Saccharomyces cerevisiae: Then and now.</title>
        <authorList>
            <person name="Engel S.R."/>
            <person name="Dietrich F.S."/>
            <person name="Fisk D.G."/>
            <person name="Binkley G."/>
            <person name="Balakrishnan R."/>
            <person name="Costanzo M.C."/>
            <person name="Dwight S.S."/>
            <person name="Hitz B.C."/>
            <person name="Karra K."/>
            <person name="Nash R.S."/>
            <person name="Weng S."/>
            <person name="Wong E.D."/>
            <person name="Lloyd P."/>
            <person name="Skrzypek M.S."/>
            <person name="Miyasato S.R."/>
            <person name="Simison M."/>
            <person name="Cherry J.M."/>
        </authorList>
    </citation>
    <scope>GENOME REANNOTATION</scope>
    <source>
        <strain>ATCC 204508 / S288c</strain>
    </source>
</reference>
<reference key="3">
    <citation type="journal article" date="2007" name="Genome Res.">
        <title>Approaching a complete repository of sequence-verified protein-encoding clones for Saccharomyces cerevisiae.</title>
        <authorList>
            <person name="Hu Y."/>
            <person name="Rolfs A."/>
            <person name="Bhullar B."/>
            <person name="Murthy T.V.S."/>
            <person name="Zhu C."/>
            <person name="Berger M.F."/>
            <person name="Camargo A.A."/>
            <person name="Kelley F."/>
            <person name="McCarron S."/>
            <person name="Jepson D."/>
            <person name="Richardson A."/>
            <person name="Raphael J."/>
            <person name="Moreira D."/>
            <person name="Taycher E."/>
            <person name="Zuo D."/>
            <person name="Mohr S."/>
            <person name="Kane M.F."/>
            <person name="Williamson J."/>
            <person name="Simpson A.J.G."/>
            <person name="Bulyk M.L."/>
            <person name="Harlow E."/>
            <person name="Marsischky G."/>
            <person name="Kolodner R.D."/>
            <person name="LaBaer J."/>
        </authorList>
    </citation>
    <scope>NUCLEOTIDE SEQUENCE [GENOMIC DNA]</scope>
    <source>
        <strain>ATCC 204508 / S288c</strain>
    </source>
</reference>
<evidence type="ECO:0000305" key="1">
    <source>
    </source>
</evidence>
<name>YIO1_YEAST</name>
<proteinExistence type="uncertain"/>
<dbReference type="EMBL" id="Z38059">
    <property type="protein sequence ID" value="CAA86137.1"/>
    <property type="molecule type" value="Genomic_DNA"/>
</dbReference>
<dbReference type="EMBL" id="AY693346">
    <property type="protein sequence ID" value="AAT93365.1"/>
    <property type="molecule type" value="Genomic_DNA"/>
</dbReference>
<dbReference type="PIR" id="S48393">
    <property type="entry name" value="S48393"/>
</dbReference>
<dbReference type="DIP" id="DIP-2102N"/>
<dbReference type="IntAct" id="P40461">
    <property type="interactions" value="5"/>
</dbReference>
<dbReference type="PaxDb" id="4932-YIL141W"/>
<dbReference type="EnsemblFungi" id="YIL141W_mRNA">
    <property type="protein sequence ID" value="YIL141W"/>
    <property type="gene ID" value="YIL141W"/>
</dbReference>
<dbReference type="AGR" id="SGD:S000001403"/>
<dbReference type="SGD" id="S000001403">
    <property type="gene designation" value="YIL141W"/>
</dbReference>
<dbReference type="HOGENOM" id="CLU_2198490_0_0_1"/>